<evidence type="ECO:0000250" key="1"/>
<evidence type="ECO:0000255" key="2"/>
<evidence type="ECO:0000269" key="3">
    <source>
    </source>
</evidence>
<evidence type="ECO:0000303" key="4">
    <source>
    </source>
</evidence>
<evidence type="ECO:0007829" key="5">
    <source>
        <dbReference type="PDB" id="7E57"/>
    </source>
</evidence>
<evidence type="ECO:0007829" key="6">
    <source>
        <dbReference type="PDB" id="7KHX"/>
    </source>
</evidence>
<keyword id="KW-0002">3D-structure</keyword>
<keyword id="KW-0025">Alternative splicing</keyword>
<keyword id="KW-0053">Apoptosis</keyword>
<keyword id="KW-1003">Cell membrane</keyword>
<keyword id="KW-1015">Disulfide bond</keyword>
<keyword id="KW-0325">Glycoprotein</keyword>
<keyword id="KW-0472">Membrane</keyword>
<keyword id="KW-0675">Receptor</keyword>
<keyword id="KW-1185">Reference proteome</keyword>
<keyword id="KW-0677">Repeat</keyword>
<keyword id="KW-0964">Secreted</keyword>
<keyword id="KW-0732">Signal</keyword>
<keyword id="KW-0812">Transmembrane</keyword>
<keyword id="KW-1133">Transmembrane helix</keyword>
<dbReference type="EMBL" id="U82534">
    <property type="protein sequence ID" value="AAB81243.1"/>
    <property type="molecule type" value="mRNA"/>
</dbReference>
<dbReference type="EMBL" id="AF109216">
    <property type="protein sequence ID" value="AAF14231.1"/>
    <property type="molecule type" value="Genomic_DNA"/>
</dbReference>
<dbReference type="EMBL" id="AF229432">
    <property type="protein sequence ID" value="AAF61566.1"/>
    <property type="molecule type" value="mRNA"/>
</dbReference>
<dbReference type="EMBL" id="AF229433">
    <property type="protein sequence ID" value="AAF61567.1"/>
    <property type="molecule type" value="mRNA"/>
</dbReference>
<dbReference type="EMBL" id="AF229434">
    <property type="protein sequence ID" value="AAF61568.1"/>
    <property type="molecule type" value="mRNA"/>
</dbReference>
<dbReference type="EMBL" id="AK020762">
    <property type="protein sequence ID" value="BAC25639.1"/>
    <property type="molecule type" value="mRNA"/>
</dbReference>
<dbReference type="CCDS" id="CCDS19056.1">
    <molecule id="O35714-1"/>
</dbReference>
<dbReference type="CCDS" id="CCDS19057.1">
    <molecule id="O35714-4"/>
</dbReference>
<dbReference type="RefSeq" id="NP_033426.1">
    <molecule id="O35714-1"/>
    <property type="nucleotide sequence ID" value="NM_009400.3"/>
</dbReference>
<dbReference type="RefSeq" id="NP_068820.1">
    <molecule id="O35714-4"/>
    <property type="nucleotide sequence ID" value="NM_021985.3"/>
</dbReference>
<dbReference type="PDB" id="7E57">
    <property type="method" value="X-ray"/>
    <property type="resolution" value="3.30 A"/>
    <property type="chains" value="C/D=1-228"/>
</dbReference>
<dbReference type="PDB" id="7KHX">
    <property type="method" value="X-ray"/>
    <property type="resolution" value="3.21 A"/>
    <property type="chains" value="C/D=20-153"/>
</dbReference>
<dbReference type="PDB" id="7RFP">
    <property type="method" value="EM"/>
    <property type="resolution" value="4.40 A"/>
    <property type="chains" value="A/B=1-228"/>
</dbReference>
<dbReference type="PDBsum" id="7E57"/>
<dbReference type="PDBsum" id="7KHX"/>
<dbReference type="PDBsum" id="7RFP"/>
<dbReference type="SMR" id="O35714"/>
<dbReference type="BioGRID" id="204248">
    <property type="interactions" value="1"/>
</dbReference>
<dbReference type="DIP" id="DIP-29666N"/>
<dbReference type="FunCoup" id="O35714">
    <property type="interactions" value="447"/>
</dbReference>
<dbReference type="IntAct" id="O35714">
    <property type="interactions" value="1"/>
</dbReference>
<dbReference type="STRING" id="10090.ENSMUSP00000099462"/>
<dbReference type="GlyCosmos" id="O35714">
    <property type="glycosylation" value="4 sites, No reported glycans"/>
</dbReference>
<dbReference type="GlyGen" id="O35714">
    <property type="glycosylation" value="4 sites"/>
</dbReference>
<dbReference type="PhosphoSitePlus" id="O35714"/>
<dbReference type="SwissPalm" id="O35714"/>
<dbReference type="PaxDb" id="10090-ENSMUSP00000099462"/>
<dbReference type="ProteomicsDB" id="260634">
    <molecule id="O35714-1"/>
</dbReference>
<dbReference type="ProteomicsDB" id="260635">
    <molecule id="O35714-2"/>
</dbReference>
<dbReference type="ProteomicsDB" id="260636">
    <molecule id="O35714-3"/>
</dbReference>
<dbReference type="ProteomicsDB" id="260637">
    <molecule id="O35714-4"/>
</dbReference>
<dbReference type="Antibodypedia" id="2154">
    <property type="antibodies" value="1219 antibodies from 43 providers"/>
</dbReference>
<dbReference type="DNASU" id="21936"/>
<dbReference type="Ensembl" id="ENSMUST00000040274.13">
    <molecule id="O35714-4"/>
    <property type="protein sequence ID" value="ENSMUSP00000040035.8"/>
    <property type="gene ID" value="ENSMUSG00000041954.19"/>
</dbReference>
<dbReference type="Ensembl" id="ENSMUST00000103173.10">
    <molecule id="O35714-1"/>
    <property type="protein sequence ID" value="ENSMUSP00000099462.4"/>
    <property type="gene ID" value="ENSMUSG00000041954.19"/>
</dbReference>
<dbReference type="GeneID" id="21936"/>
<dbReference type="KEGG" id="mmu:21936"/>
<dbReference type="UCSC" id="uc008wfw.1">
    <molecule id="O35714-4"/>
    <property type="organism name" value="mouse"/>
</dbReference>
<dbReference type="UCSC" id="uc008wfx.1">
    <molecule id="O35714-1"/>
    <property type="organism name" value="mouse"/>
</dbReference>
<dbReference type="AGR" id="MGI:894675"/>
<dbReference type="CTD" id="8784"/>
<dbReference type="MGI" id="MGI:894675">
    <property type="gene designation" value="Tnfrsf18"/>
</dbReference>
<dbReference type="VEuPathDB" id="HostDB:ENSMUSG00000041954"/>
<dbReference type="eggNOG" id="ENOG502SAN0">
    <property type="taxonomic scope" value="Eukaryota"/>
</dbReference>
<dbReference type="GeneTree" id="ENSGT00730000111424"/>
<dbReference type="HOGENOM" id="CLU_076906_1_0_1"/>
<dbReference type="InParanoid" id="O35714"/>
<dbReference type="OMA" id="DTCSCQF"/>
<dbReference type="OrthoDB" id="67804at9989"/>
<dbReference type="TreeFam" id="TF336151"/>
<dbReference type="Reactome" id="R-MMU-5669034">
    <property type="pathway name" value="TNFs bind their physiological receptors"/>
</dbReference>
<dbReference type="BioGRID-ORCS" id="21936">
    <property type="hits" value="2 hits in 78 CRISPR screens"/>
</dbReference>
<dbReference type="PRO" id="PR:O35714"/>
<dbReference type="Proteomes" id="UP000000589">
    <property type="component" value="Chromosome 4"/>
</dbReference>
<dbReference type="RNAct" id="O35714">
    <property type="molecule type" value="protein"/>
</dbReference>
<dbReference type="Bgee" id="ENSMUSG00000041954">
    <property type="expression patterns" value="Expressed in retinal neural layer and 81 other cell types or tissues"/>
</dbReference>
<dbReference type="ExpressionAtlas" id="O35714">
    <property type="expression patterns" value="baseline and differential"/>
</dbReference>
<dbReference type="GO" id="GO:0009897">
    <property type="term" value="C:external side of plasma membrane"/>
    <property type="evidence" value="ECO:0000314"/>
    <property type="project" value="MGI"/>
</dbReference>
<dbReference type="GO" id="GO:0005576">
    <property type="term" value="C:extracellular region"/>
    <property type="evidence" value="ECO:0007669"/>
    <property type="project" value="UniProtKB-SubCell"/>
</dbReference>
<dbReference type="GO" id="GO:0005031">
    <property type="term" value="F:tumor necrosis factor receptor activity"/>
    <property type="evidence" value="ECO:0007669"/>
    <property type="project" value="InterPro"/>
</dbReference>
<dbReference type="GO" id="GO:0006915">
    <property type="term" value="P:apoptotic process"/>
    <property type="evidence" value="ECO:0007669"/>
    <property type="project" value="UniProtKB-KW"/>
</dbReference>
<dbReference type="GO" id="GO:0043066">
    <property type="term" value="P:negative regulation of apoptotic process"/>
    <property type="evidence" value="ECO:0007669"/>
    <property type="project" value="InterPro"/>
</dbReference>
<dbReference type="GO" id="GO:0045785">
    <property type="term" value="P:positive regulation of cell adhesion"/>
    <property type="evidence" value="ECO:0000315"/>
    <property type="project" value="UniProtKB"/>
</dbReference>
<dbReference type="CDD" id="cd13417">
    <property type="entry name" value="TNFRSF18"/>
    <property type="match status" value="1"/>
</dbReference>
<dbReference type="FunFam" id="2.10.50.10:FF:000084">
    <property type="entry name" value="Tumor necrosis factor receptor superfamily member 18"/>
    <property type="match status" value="1"/>
</dbReference>
<dbReference type="Gene3D" id="2.10.50.10">
    <property type="entry name" value="Tumor Necrosis Factor Receptor, subunit A, domain 2"/>
    <property type="match status" value="1"/>
</dbReference>
<dbReference type="InterPro" id="IPR001368">
    <property type="entry name" value="TNFR/NGFR_Cys_rich_reg"/>
</dbReference>
<dbReference type="InterPro" id="IPR022318">
    <property type="entry name" value="TNFR_18"/>
</dbReference>
<dbReference type="InterPro" id="IPR053107">
    <property type="entry name" value="TNFRSF18"/>
</dbReference>
<dbReference type="InterPro" id="IPR034018">
    <property type="entry name" value="TNFRSF18_N"/>
</dbReference>
<dbReference type="PANTHER" id="PTHR47388">
    <property type="entry name" value="TUMOR NECROSIS FACTOR RECEPTOR SUPERFAMILY MEMBER 18"/>
    <property type="match status" value="1"/>
</dbReference>
<dbReference type="PANTHER" id="PTHR47388:SF1">
    <property type="entry name" value="TUMOR NECROSIS FACTOR RECEPTOR SUPERFAMILY MEMBER 18"/>
    <property type="match status" value="1"/>
</dbReference>
<dbReference type="PRINTS" id="PR01968">
    <property type="entry name" value="TNFACTORR18"/>
</dbReference>
<dbReference type="SMART" id="SM00208">
    <property type="entry name" value="TNFR"/>
    <property type="match status" value="2"/>
</dbReference>
<comment type="function">
    <text evidence="1">Receptor for TNFSF18. Seems to be involved in interactions between activated T-lymphocytes and endothelial cells and in the regulation of T-cell receptor-mediated cell death. Mediated NF-kappa-B activation via the TRAF2/NIK pathway (By similarity).</text>
</comment>
<comment type="subunit">
    <text evidence="1">Binds to TRAF1, TRAF2, and TRAF3, but not TRAF5 and TRAF6 (By similarity). Binds through its C-terminus to SIVA1/SIVA.</text>
</comment>
<comment type="interaction">
    <interactant intactId="EBI-523358">
        <id>O35714</id>
    </interactant>
    <interactant intactId="EBI-523345">
        <id>Q7TS55</id>
        <label>Tnfsf18</label>
    </interactant>
    <organismsDiffer>false</organismsDiffer>
    <experiments>4</experiments>
</comment>
<comment type="subcellular location">
    <molecule>Isoform A</molecule>
    <subcellularLocation>
        <location>Cell membrane</location>
        <topology>Single-pass type I membrane protein</topology>
    </subcellularLocation>
</comment>
<comment type="subcellular location">
    <molecule>Isoform B</molecule>
    <subcellularLocation>
        <location>Cell membrane</location>
        <topology>Single-pass type I membrane protein</topology>
    </subcellularLocation>
</comment>
<comment type="subcellular location">
    <molecule>Isoform C</molecule>
    <subcellularLocation>
        <location>Cell membrane</location>
        <topology>Single-pass type I membrane protein</topology>
    </subcellularLocation>
</comment>
<comment type="subcellular location">
    <molecule>Isoform D</molecule>
    <subcellularLocation>
        <location>Secreted</location>
    </subcellularLocation>
</comment>
<comment type="alternative products">
    <event type="alternative splicing"/>
    <isoform>
        <id>O35714-1</id>
        <name>A</name>
        <sequence type="displayed"/>
    </isoform>
    <isoform>
        <id>O35714-2</id>
        <name>B</name>
        <sequence type="described" ref="VSP_006510"/>
    </isoform>
    <isoform>
        <id>O35714-3</id>
        <name>C</name>
        <sequence type="described" ref="VSP_006511"/>
    </isoform>
    <isoform>
        <id>O35714-4</id>
        <name>D</name>
        <sequence type="described" ref="VSP_006509"/>
    </isoform>
</comment>
<comment type="tissue specificity">
    <text>Preferentially expressed in activated T lymphocytes.</text>
</comment>
<comment type="induction">
    <text>Up-regulated in peripherical mononuclear cells after antigen stimulation/lymphocyte activation.</text>
</comment>
<gene>
    <name type="primary">Tnfrsf18</name>
    <name type="synonym">Gitr</name>
</gene>
<feature type="signal peptide" evidence="2">
    <location>
        <begin position="1"/>
        <end position="19"/>
    </location>
</feature>
<feature type="chain" id="PRO_0000034596" description="Tumor necrosis factor receptor superfamily member 18">
    <location>
        <begin position="20"/>
        <end position="228"/>
    </location>
</feature>
<feature type="topological domain" description="Extracellular" evidence="2">
    <location>
        <begin position="20"/>
        <end position="153"/>
    </location>
</feature>
<feature type="transmembrane region" description="Helical" evidence="2">
    <location>
        <begin position="154"/>
        <end position="174"/>
    </location>
</feature>
<feature type="topological domain" description="Cytoplasmic" evidence="2">
    <location>
        <begin position="175"/>
        <end position="228"/>
    </location>
</feature>
<feature type="repeat" description="TNFR-Cys 1">
    <location>
        <begin position="28"/>
        <end position="61"/>
    </location>
</feature>
<feature type="repeat" description="TNFR-Cys 2">
    <location>
        <begin position="62"/>
        <end position="101"/>
    </location>
</feature>
<feature type="repeat" description="TNFR-Cys 3">
    <location>
        <begin position="102"/>
        <end position="142"/>
    </location>
</feature>
<feature type="glycosylation site" description="N-linked (GlcNAc...) asparagine" evidence="2">
    <location>
        <position position="36"/>
    </location>
</feature>
<feature type="glycosylation site" description="N-linked (GlcNAc...) asparagine" evidence="2">
    <location>
        <position position="40"/>
    </location>
</feature>
<feature type="glycosylation site" description="N-linked (GlcNAc...) asparagine" evidence="2">
    <location>
        <position position="121"/>
    </location>
</feature>
<feature type="glycosylation site" description="N-linked (GlcNAc...) asparagine" evidence="2">
    <location>
        <position position="134"/>
    </location>
</feature>
<feature type="disulfide bond" evidence="1">
    <location>
        <begin position="29"/>
        <end position="44"/>
    </location>
</feature>
<feature type="disulfide bond" evidence="1">
    <location>
        <begin position="62"/>
        <end position="74"/>
    </location>
</feature>
<feature type="disulfide bond" evidence="1">
    <location>
        <begin position="69"/>
        <end position="82"/>
    </location>
</feature>
<feature type="disulfide bond" evidence="1">
    <location>
        <begin position="103"/>
        <end position="122"/>
    </location>
</feature>
<feature type="disulfide bond" evidence="1">
    <location>
        <begin position="116"/>
        <end position="141"/>
    </location>
</feature>
<feature type="splice variant" id="VSP_006509" description="In isoform D." evidence="4">
    <original>NCSQFGFLTMFPGNKTHNAVCIPEPLPTEQYGHLTVIFLVMAACIFFLTTVQLGLHIWQLRRQHMCPRETQPFAEVQLSAEDACSFQFPEEERGEQTEEKCHLGGRWP</original>
    <variation>KDPAIRGGAVVS</variation>
    <location>
        <begin position="121"/>
        <end position="228"/>
    </location>
</feature>
<feature type="splice variant" id="VSP_006510" description="In isoform B." evidence="4">
    <original>ETQPFAEVQLSAEDACSFQFPEEERGEQTEEKCHLGGRWP</original>
    <variation>VLLQRPSHSRRCSCQLRMLAASSSLRRNAGSRQKKSVIWGVGGHEAWSSSVPQARRYKTCPAIPLVRAGAMLCTLPWAWPCSPQQWRKWVYESGELRLGPMAAFLI</variation>
    <location>
        <begin position="189"/>
        <end position="228"/>
    </location>
</feature>
<feature type="splice variant" id="VSP_006511" description="In isoform C." evidence="4">
    <original>ETQPFAEVQLSAEDACSFQFPEEERGEQTEEKCHLGGRWP</original>
    <variation>GQLCPREGENVSQAPHLPQFYYRDPAIRGGAVVS</variation>
    <location>
        <begin position="189"/>
        <end position="228"/>
    </location>
</feature>
<feature type="mutagenesis site" description="Does not bind to SIVA1." evidence="3">
    <original>S</original>
    <variation>A</variation>
    <location>
        <position position="199"/>
    </location>
</feature>
<feature type="mutagenesis site" description="No effect on binding to SIVA1; when associated with G-204." evidence="3">
    <original>E</original>
    <variation>R</variation>
    <location>
        <position position="201"/>
    </location>
</feature>
<feature type="mutagenesis site" description="No effect on binding to SIVA1; when associated with R-201." evidence="3">
    <original>C</original>
    <variation>G</variation>
    <location>
        <position position="204"/>
    </location>
</feature>
<feature type="mutagenesis site" description="Does not bind to SIVA1." evidence="3">
    <original>P</original>
    <variation>A</variation>
    <location>
        <position position="209"/>
    </location>
</feature>
<feature type="mutagenesis site" description="Does not bind to SIVA1." evidence="3">
    <original>EEE</original>
    <variation>RVV</variation>
    <location>
        <begin position="210"/>
        <end position="212"/>
    </location>
</feature>
<feature type="strand" evidence="5">
    <location>
        <begin position="31"/>
        <end position="33"/>
    </location>
</feature>
<feature type="strand" evidence="6">
    <location>
        <begin position="34"/>
        <end position="37"/>
    </location>
</feature>
<feature type="strand" evidence="6">
    <location>
        <begin position="43"/>
        <end position="45"/>
    </location>
</feature>
<feature type="strand" evidence="6">
    <location>
        <begin position="67"/>
        <end position="71"/>
    </location>
</feature>
<feature type="strand" evidence="6">
    <location>
        <begin position="76"/>
        <end position="79"/>
    </location>
</feature>
<feature type="strand" evidence="6">
    <location>
        <begin position="89"/>
        <end position="91"/>
    </location>
</feature>
<feature type="strand" evidence="6">
    <location>
        <begin position="93"/>
        <end position="95"/>
    </location>
</feature>
<feature type="strand" evidence="6">
    <location>
        <begin position="97"/>
        <end position="99"/>
    </location>
</feature>
<feature type="strand" evidence="5">
    <location>
        <begin position="111"/>
        <end position="113"/>
    </location>
</feature>
<feature type="helix" evidence="6">
    <location>
        <begin position="122"/>
        <end position="125"/>
    </location>
</feature>
<feature type="strand" evidence="5">
    <location>
        <begin position="128"/>
        <end position="131"/>
    </location>
</feature>
<feature type="strand" evidence="6">
    <location>
        <begin position="135"/>
        <end position="137"/>
    </location>
</feature>
<feature type="strand" evidence="5">
    <location>
        <begin position="140"/>
        <end position="142"/>
    </location>
</feature>
<organism>
    <name type="scientific">Mus musculus</name>
    <name type="common">Mouse</name>
    <dbReference type="NCBI Taxonomy" id="10090"/>
    <lineage>
        <taxon>Eukaryota</taxon>
        <taxon>Metazoa</taxon>
        <taxon>Chordata</taxon>
        <taxon>Craniata</taxon>
        <taxon>Vertebrata</taxon>
        <taxon>Euteleostomi</taxon>
        <taxon>Mammalia</taxon>
        <taxon>Eutheria</taxon>
        <taxon>Euarchontoglires</taxon>
        <taxon>Glires</taxon>
        <taxon>Rodentia</taxon>
        <taxon>Myomorpha</taxon>
        <taxon>Muroidea</taxon>
        <taxon>Muridae</taxon>
        <taxon>Murinae</taxon>
        <taxon>Mus</taxon>
        <taxon>Mus</taxon>
    </lineage>
</organism>
<sequence>MGAWAMLYGVSMLCVLDLGQPSVVEEPGCGPGKVQNGSGNNTRCCSLYAPGKEDCPKERCICVTPEYHCGDPQCKICKHYPCQPGQRVESQGDIVFGFRCVACAMGTFSAGRDGHCRLWTNCSQFGFLTMFPGNKTHNAVCIPEPLPTEQYGHLTVIFLVMAACIFFLTTVQLGLHIWQLRRQHMCPRETQPFAEVQLSAEDACSFQFPEEERGEQTEEKCHLGGRWP</sequence>
<protein>
    <recommendedName>
        <fullName>Tumor necrosis factor receptor superfamily member 18</fullName>
    </recommendedName>
    <alternativeName>
        <fullName>Glucocorticoid-induced TNFR-related protein</fullName>
    </alternativeName>
    <cdAntigenName>CD357</cdAntigenName>
</protein>
<reference key="1">
    <citation type="journal article" date="1997" name="Proc. Natl. Acad. Sci. U.S.A.">
        <title>A new member of the tumor necrosis factor/nerve growth factor receptor family inhibits T cell receptor-induced apoptosis.</title>
        <authorList>
            <person name="Nocentini G."/>
            <person name="Giunchi L."/>
            <person name="Ronchetti S."/>
            <person name="Krausz L.T."/>
            <person name="Bartoli A."/>
            <person name="Moraca R."/>
            <person name="Migliorati G."/>
            <person name="Riccardi C."/>
        </authorList>
    </citation>
    <scope>NUCLEOTIDE SEQUENCE [MRNA] (ISOFORM A)</scope>
    <source>
        <strain>C3H/HeJ</strain>
    </source>
</reference>
<reference key="2">
    <citation type="journal article" date="2000" name="DNA Cell Biol.">
        <title>Gene structure and chromosomal assignment of mouse GITR, a member of the tumor necrosis factor/nerve growth factor receptor family.</title>
        <authorList>
            <person name="Nocentini G."/>
            <person name="Bartoli A."/>
            <person name="Ronchetti S."/>
            <person name="Giunchi L."/>
            <person name="Cupelli A."/>
            <person name="Delfino D."/>
            <person name="Migliorati G."/>
            <person name="Riccardi C."/>
        </authorList>
    </citation>
    <scope>NUCLEOTIDE SEQUENCE (ISOFORM A)</scope>
    <source>
        <strain>BALB/cJ</strain>
    </source>
</reference>
<reference key="3">
    <citation type="journal article" date="2000" name="Cell Death Differ.">
        <title>Identification of three novel mRNA splice variants of GITR.</title>
        <authorList>
            <person name="Nocentini G."/>
            <person name="Ronchetti S."/>
            <person name="Bartoli A."/>
            <person name="Spinicelli S."/>
            <person name="Delfino D."/>
            <person name="Brunetti L."/>
            <person name="Migliorati G."/>
            <person name="Riccardi C."/>
        </authorList>
    </citation>
    <scope>NUCLEOTIDE SEQUENCE [MRNA] (ISOFORMS B; C AND D)</scope>
    <source>
        <tissue>Thymus</tissue>
    </source>
</reference>
<reference key="4">
    <citation type="journal article" date="2005" name="Science">
        <title>The transcriptional landscape of the mammalian genome.</title>
        <authorList>
            <person name="Carninci P."/>
            <person name="Kasukawa T."/>
            <person name="Katayama S."/>
            <person name="Gough J."/>
            <person name="Frith M.C."/>
            <person name="Maeda N."/>
            <person name="Oyama R."/>
            <person name="Ravasi T."/>
            <person name="Lenhard B."/>
            <person name="Wells C."/>
            <person name="Kodzius R."/>
            <person name="Shimokawa K."/>
            <person name="Bajic V.B."/>
            <person name="Brenner S.E."/>
            <person name="Batalov S."/>
            <person name="Forrest A.R."/>
            <person name="Zavolan M."/>
            <person name="Davis M.J."/>
            <person name="Wilming L.G."/>
            <person name="Aidinis V."/>
            <person name="Allen J.E."/>
            <person name="Ambesi-Impiombato A."/>
            <person name="Apweiler R."/>
            <person name="Aturaliya R.N."/>
            <person name="Bailey T.L."/>
            <person name="Bansal M."/>
            <person name="Baxter L."/>
            <person name="Beisel K.W."/>
            <person name="Bersano T."/>
            <person name="Bono H."/>
            <person name="Chalk A.M."/>
            <person name="Chiu K.P."/>
            <person name="Choudhary V."/>
            <person name="Christoffels A."/>
            <person name="Clutterbuck D.R."/>
            <person name="Crowe M.L."/>
            <person name="Dalla E."/>
            <person name="Dalrymple B.P."/>
            <person name="de Bono B."/>
            <person name="Della Gatta G."/>
            <person name="di Bernardo D."/>
            <person name="Down T."/>
            <person name="Engstrom P."/>
            <person name="Fagiolini M."/>
            <person name="Faulkner G."/>
            <person name="Fletcher C.F."/>
            <person name="Fukushima T."/>
            <person name="Furuno M."/>
            <person name="Futaki S."/>
            <person name="Gariboldi M."/>
            <person name="Georgii-Hemming P."/>
            <person name="Gingeras T.R."/>
            <person name="Gojobori T."/>
            <person name="Green R.E."/>
            <person name="Gustincich S."/>
            <person name="Harbers M."/>
            <person name="Hayashi Y."/>
            <person name="Hensch T.K."/>
            <person name="Hirokawa N."/>
            <person name="Hill D."/>
            <person name="Huminiecki L."/>
            <person name="Iacono M."/>
            <person name="Ikeo K."/>
            <person name="Iwama A."/>
            <person name="Ishikawa T."/>
            <person name="Jakt M."/>
            <person name="Kanapin A."/>
            <person name="Katoh M."/>
            <person name="Kawasawa Y."/>
            <person name="Kelso J."/>
            <person name="Kitamura H."/>
            <person name="Kitano H."/>
            <person name="Kollias G."/>
            <person name="Krishnan S.P."/>
            <person name="Kruger A."/>
            <person name="Kummerfeld S.K."/>
            <person name="Kurochkin I.V."/>
            <person name="Lareau L.F."/>
            <person name="Lazarevic D."/>
            <person name="Lipovich L."/>
            <person name="Liu J."/>
            <person name="Liuni S."/>
            <person name="McWilliam S."/>
            <person name="Madan Babu M."/>
            <person name="Madera M."/>
            <person name="Marchionni L."/>
            <person name="Matsuda H."/>
            <person name="Matsuzawa S."/>
            <person name="Miki H."/>
            <person name="Mignone F."/>
            <person name="Miyake S."/>
            <person name="Morris K."/>
            <person name="Mottagui-Tabar S."/>
            <person name="Mulder N."/>
            <person name="Nakano N."/>
            <person name="Nakauchi H."/>
            <person name="Ng P."/>
            <person name="Nilsson R."/>
            <person name="Nishiguchi S."/>
            <person name="Nishikawa S."/>
            <person name="Nori F."/>
            <person name="Ohara O."/>
            <person name="Okazaki Y."/>
            <person name="Orlando V."/>
            <person name="Pang K.C."/>
            <person name="Pavan W.J."/>
            <person name="Pavesi G."/>
            <person name="Pesole G."/>
            <person name="Petrovsky N."/>
            <person name="Piazza S."/>
            <person name="Reed J."/>
            <person name="Reid J.F."/>
            <person name="Ring B.Z."/>
            <person name="Ringwald M."/>
            <person name="Rost B."/>
            <person name="Ruan Y."/>
            <person name="Salzberg S.L."/>
            <person name="Sandelin A."/>
            <person name="Schneider C."/>
            <person name="Schoenbach C."/>
            <person name="Sekiguchi K."/>
            <person name="Semple C.A."/>
            <person name="Seno S."/>
            <person name="Sessa L."/>
            <person name="Sheng Y."/>
            <person name="Shibata Y."/>
            <person name="Shimada H."/>
            <person name="Shimada K."/>
            <person name="Silva D."/>
            <person name="Sinclair B."/>
            <person name="Sperling S."/>
            <person name="Stupka E."/>
            <person name="Sugiura K."/>
            <person name="Sultana R."/>
            <person name="Takenaka Y."/>
            <person name="Taki K."/>
            <person name="Tammoja K."/>
            <person name="Tan S.L."/>
            <person name="Tang S."/>
            <person name="Taylor M.S."/>
            <person name="Tegner J."/>
            <person name="Teichmann S.A."/>
            <person name="Ueda H.R."/>
            <person name="van Nimwegen E."/>
            <person name="Verardo R."/>
            <person name="Wei C.L."/>
            <person name="Yagi K."/>
            <person name="Yamanishi H."/>
            <person name="Zabarovsky E."/>
            <person name="Zhu S."/>
            <person name="Zimmer A."/>
            <person name="Hide W."/>
            <person name="Bult C."/>
            <person name="Grimmond S.M."/>
            <person name="Teasdale R.D."/>
            <person name="Liu E.T."/>
            <person name="Brusic V."/>
            <person name="Quackenbush J."/>
            <person name="Wahlestedt C."/>
            <person name="Mattick J.S."/>
            <person name="Hume D.A."/>
            <person name="Kai C."/>
            <person name="Sasaki D."/>
            <person name="Tomaru Y."/>
            <person name="Fukuda S."/>
            <person name="Kanamori-Katayama M."/>
            <person name="Suzuki M."/>
            <person name="Aoki J."/>
            <person name="Arakawa T."/>
            <person name="Iida J."/>
            <person name="Imamura K."/>
            <person name="Itoh M."/>
            <person name="Kato T."/>
            <person name="Kawaji H."/>
            <person name="Kawagashira N."/>
            <person name="Kawashima T."/>
            <person name="Kojima M."/>
            <person name="Kondo S."/>
            <person name="Konno H."/>
            <person name="Nakano K."/>
            <person name="Ninomiya N."/>
            <person name="Nishio T."/>
            <person name="Okada M."/>
            <person name="Plessy C."/>
            <person name="Shibata K."/>
            <person name="Shiraki T."/>
            <person name="Suzuki S."/>
            <person name="Tagami M."/>
            <person name="Waki K."/>
            <person name="Watahiki A."/>
            <person name="Okamura-Oho Y."/>
            <person name="Suzuki H."/>
            <person name="Kawai J."/>
            <person name="Hayashizaki Y."/>
        </authorList>
    </citation>
    <scope>NUCLEOTIDE SEQUENCE [LARGE SCALE MRNA] (ISOFORM A)</scope>
    <source>
        <strain>C57BL/6J</strain>
        <tissue>Thymus</tissue>
    </source>
</reference>
<reference key="5">
    <citation type="journal article" date="2002" name="Cell Death Differ.">
        <title>GITR interacts with the pro-apoptotic protein Siva and induces apoptosis.</title>
        <authorList>
            <person name="Spinicelli S."/>
            <person name="Nocentini G."/>
            <person name="Ronchetti S."/>
            <person name="Krausz L.T."/>
            <person name="Bianchini R."/>
            <person name="Riccardi C."/>
        </authorList>
    </citation>
    <scope>INTERACTION WITH SIVA1</scope>
    <scope>MUTAGENESIS OF SER-199; GLU-201; CYS-204; PRO-209 AND 210-GLU--GLU-212</scope>
</reference>
<proteinExistence type="evidence at protein level"/>
<accession>O35714</accession>
<accession>Q9JKR1</accession>
<accession>Q9JKR2</accession>
<accession>Q9JKR3</accession>
<name>TNR18_MOUSE</name>